<gene>
    <name evidence="1" type="primary">rpoZ</name>
    <name type="ordered locus">RPR_03510</name>
</gene>
<comment type="function">
    <text evidence="1">Promotes RNA polymerase assembly. Latches the N- and C-terminal regions of the beta' subunit thereby facilitating its interaction with the beta and alpha subunits.</text>
</comment>
<comment type="catalytic activity">
    <reaction evidence="1">
        <text>RNA(n) + a ribonucleoside 5'-triphosphate = RNA(n+1) + diphosphate</text>
        <dbReference type="Rhea" id="RHEA:21248"/>
        <dbReference type="Rhea" id="RHEA-COMP:14527"/>
        <dbReference type="Rhea" id="RHEA-COMP:17342"/>
        <dbReference type="ChEBI" id="CHEBI:33019"/>
        <dbReference type="ChEBI" id="CHEBI:61557"/>
        <dbReference type="ChEBI" id="CHEBI:140395"/>
        <dbReference type="EC" id="2.7.7.6"/>
    </reaction>
</comment>
<comment type="subunit">
    <text evidence="1">The RNAP catalytic core consists of 2 alpha, 1 beta, 1 beta' and 1 omega subunit. When a sigma factor is associated with the core the holoenzyme is formed, which can initiate transcription.</text>
</comment>
<comment type="similarity">
    <text evidence="1">Belongs to the RNA polymerase subunit omega family.</text>
</comment>
<proteinExistence type="inferred from homology"/>
<dbReference type="EC" id="2.7.7.6" evidence="1"/>
<dbReference type="EMBL" id="CP001227">
    <property type="protein sequence ID" value="ACR47444.1"/>
    <property type="molecule type" value="Genomic_DNA"/>
</dbReference>
<dbReference type="RefSeq" id="WP_012736684.1">
    <property type="nucleotide sequence ID" value="NC_012730.1"/>
</dbReference>
<dbReference type="SMR" id="C4K1J3"/>
<dbReference type="KEGG" id="rpk:RPR_03510"/>
<dbReference type="HOGENOM" id="CLU_138545_0_0_5"/>
<dbReference type="Proteomes" id="UP000005015">
    <property type="component" value="Chromosome"/>
</dbReference>
<dbReference type="GO" id="GO:0000428">
    <property type="term" value="C:DNA-directed RNA polymerase complex"/>
    <property type="evidence" value="ECO:0007669"/>
    <property type="project" value="UniProtKB-KW"/>
</dbReference>
<dbReference type="GO" id="GO:0003677">
    <property type="term" value="F:DNA binding"/>
    <property type="evidence" value="ECO:0007669"/>
    <property type="project" value="UniProtKB-UniRule"/>
</dbReference>
<dbReference type="GO" id="GO:0003899">
    <property type="term" value="F:DNA-directed RNA polymerase activity"/>
    <property type="evidence" value="ECO:0007669"/>
    <property type="project" value="UniProtKB-UniRule"/>
</dbReference>
<dbReference type="GO" id="GO:0006351">
    <property type="term" value="P:DNA-templated transcription"/>
    <property type="evidence" value="ECO:0007669"/>
    <property type="project" value="UniProtKB-UniRule"/>
</dbReference>
<dbReference type="Gene3D" id="3.90.940.10">
    <property type="match status" value="1"/>
</dbReference>
<dbReference type="HAMAP" id="MF_00366">
    <property type="entry name" value="RNApol_bact_RpoZ"/>
    <property type="match status" value="1"/>
</dbReference>
<dbReference type="InterPro" id="IPR003716">
    <property type="entry name" value="DNA-dir_RNA_pol_omega"/>
</dbReference>
<dbReference type="InterPro" id="IPR006110">
    <property type="entry name" value="Pol_omega/Rpo6/RPB6"/>
</dbReference>
<dbReference type="InterPro" id="IPR036161">
    <property type="entry name" value="RPB6/omega-like_sf"/>
</dbReference>
<dbReference type="NCBIfam" id="TIGR00690">
    <property type="entry name" value="rpoZ"/>
    <property type="match status" value="1"/>
</dbReference>
<dbReference type="PANTHER" id="PTHR34476">
    <property type="entry name" value="DNA-DIRECTED RNA POLYMERASE SUBUNIT OMEGA"/>
    <property type="match status" value="1"/>
</dbReference>
<dbReference type="PANTHER" id="PTHR34476:SF1">
    <property type="entry name" value="DNA-DIRECTED RNA POLYMERASE SUBUNIT OMEGA"/>
    <property type="match status" value="1"/>
</dbReference>
<dbReference type="Pfam" id="PF01192">
    <property type="entry name" value="RNA_pol_Rpb6"/>
    <property type="match status" value="1"/>
</dbReference>
<dbReference type="SMART" id="SM01409">
    <property type="entry name" value="RNA_pol_Rpb6"/>
    <property type="match status" value="1"/>
</dbReference>
<dbReference type="SUPFAM" id="SSF63562">
    <property type="entry name" value="RPB6/omega subunit-like"/>
    <property type="match status" value="1"/>
</dbReference>
<name>RPOZ_RICPU</name>
<evidence type="ECO:0000255" key="1">
    <source>
        <dbReference type="HAMAP-Rule" id="MF_00366"/>
    </source>
</evidence>
<feature type="chain" id="PRO_1000205529" description="DNA-directed RNA polymerase subunit omega">
    <location>
        <begin position="1"/>
        <end position="127"/>
    </location>
</feature>
<keyword id="KW-0240">DNA-directed RNA polymerase</keyword>
<keyword id="KW-0548">Nucleotidyltransferase</keyword>
<keyword id="KW-0804">Transcription</keyword>
<keyword id="KW-0808">Transferase</keyword>
<sequence>MARITAEDCNKIIPDRFRLVVLATRYAKLLNYKVETNQIKKEKRDKPPVIALRRIAAGKVSVAQLEQDLINSLRTRTMIEPLVNQDESEAVEEKFEYLSEVYIGEDYSDLDDQIFIDENGEDYETDK</sequence>
<accession>C4K1J3</accession>
<reference key="1">
    <citation type="journal article" date="2009" name="PLoS ONE">
        <title>Genome sequence of the endosymbiont Rickettsia peacockii and comparison with virulent Rickettsia rickettsii: identification of virulence factors.</title>
        <authorList>
            <person name="Felsheim R.F."/>
            <person name="Kurtti T.J."/>
            <person name="Munderloh U.G."/>
        </authorList>
    </citation>
    <scope>NUCLEOTIDE SEQUENCE [LARGE SCALE GENOMIC DNA]</scope>
    <source>
        <strain>Rustic</strain>
    </source>
</reference>
<organism>
    <name type="scientific">Rickettsia peacockii (strain Rustic)</name>
    <dbReference type="NCBI Taxonomy" id="562019"/>
    <lineage>
        <taxon>Bacteria</taxon>
        <taxon>Pseudomonadati</taxon>
        <taxon>Pseudomonadota</taxon>
        <taxon>Alphaproteobacteria</taxon>
        <taxon>Rickettsiales</taxon>
        <taxon>Rickettsiaceae</taxon>
        <taxon>Rickettsieae</taxon>
        <taxon>Rickettsia</taxon>
        <taxon>spotted fever group</taxon>
    </lineage>
</organism>
<protein>
    <recommendedName>
        <fullName evidence="1">DNA-directed RNA polymerase subunit omega</fullName>
        <shortName evidence="1">RNAP omega subunit</shortName>
        <ecNumber evidence="1">2.7.7.6</ecNumber>
    </recommendedName>
    <alternativeName>
        <fullName evidence="1">RNA polymerase omega subunit</fullName>
    </alternativeName>
    <alternativeName>
        <fullName evidence="1">Transcriptase subunit omega</fullName>
    </alternativeName>
</protein>